<evidence type="ECO:0000255" key="1">
    <source>
        <dbReference type="HAMAP-Rule" id="MF_00122"/>
    </source>
</evidence>
<protein>
    <recommendedName>
        <fullName evidence="1">Aspartyl/glutamyl-tRNA(Asn/Gln) amidotransferase subunit C</fullName>
        <shortName evidence="1">Asp/Glu-ADT subunit C</shortName>
        <ecNumber evidence="1">6.3.5.-</ecNumber>
    </recommendedName>
</protein>
<keyword id="KW-0067">ATP-binding</keyword>
<keyword id="KW-0436">Ligase</keyword>
<keyword id="KW-0547">Nucleotide-binding</keyword>
<keyword id="KW-0648">Protein biosynthesis</keyword>
<comment type="function">
    <text evidence="1">Allows the formation of correctly charged Asn-tRNA(Asn) or Gln-tRNA(Gln) through the transamidation of misacylated Asp-tRNA(Asn) or Glu-tRNA(Gln) in organisms which lack either or both of asparaginyl-tRNA or glutaminyl-tRNA synthetases. The reaction takes place in the presence of glutamine and ATP through an activated phospho-Asp-tRNA(Asn) or phospho-Glu-tRNA(Gln).</text>
</comment>
<comment type="catalytic activity">
    <reaction evidence="1">
        <text>L-glutamyl-tRNA(Gln) + L-glutamine + ATP + H2O = L-glutaminyl-tRNA(Gln) + L-glutamate + ADP + phosphate + H(+)</text>
        <dbReference type="Rhea" id="RHEA:17521"/>
        <dbReference type="Rhea" id="RHEA-COMP:9681"/>
        <dbReference type="Rhea" id="RHEA-COMP:9684"/>
        <dbReference type="ChEBI" id="CHEBI:15377"/>
        <dbReference type="ChEBI" id="CHEBI:15378"/>
        <dbReference type="ChEBI" id="CHEBI:29985"/>
        <dbReference type="ChEBI" id="CHEBI:30616"/>
        <dbReference type="ChEBI" id="CHEBI:43474"/>
        <dbReference type="ChEBI" id="CHEBI:58359"/>
        <dbReference type="ChEBI" id="CHEBI:78520"/>
        <dbReference type="ChEBI" id="CHEBI:78521"/>
        <dbReference type="ChEBI" id="CHEBI:456216"/>
    </reaction>
</comment>
<comment type="catalytic activity">
    <reaction evidence="1">
        <text>L-aspartyl-tRNA(Asn) + L-glutamine + ATP + H2O = L-asparaginyl-tRNA(Asn) + L-glutamate + ADP + phosphate + 2 H(+)</text>
        <dbReference type="Rhea" id="RHEA:14513"/>
        <dbReference type="Rhea" id="RHEA-COMP:9674"/>
        <dbReference type="Rhea" id="RHEA-COMP:9677"/>
        <dbReference type="ChEBI" id="CHEBI:15377"/>
        <dbReference type="ChEBI" id="CHEBI:15378"/>
        <dbReference type="ChEBI" id="CHEBI:29985"/>
        <dbReference type="ChEBI" id="CHEBI:30616"/>
        <dbReference type="ChEBI" id="CHEBI:43474"/>
        <dbReference type="ChEBI" id="CHEBI:58359"/>
        <dbReference type="ChEBI" id="CHEBI:78515"/>
        <dbReference type="ChEBI" id="CHEBI:78516"/>
        <dbReference type="ChEBI" id="CHEBI:456216"/>
    </reaction>
</comment>
<comment type="subunit">
    <text evidence="1">Heterotrimer of A, B and C subunits.</text>
</comment>
<comment type="similarity">
    <text evidence="1">Belongs to the GatC family.</text>
</comment>
<reference key="1">
    <citation type="journal article" date="2009" name="ISME J.">
        <title>The genome sequence of the psychrophilic archaeon, Methanococcoides burtonii: the role of genome evolution in cold adaptation.</title>
        <authorList>
            <person name="Allen M.A."/>
            <person name="Lauro F.M."/>
            <person name="Williams T.J."/>
            <person name="Burg D."/>
            <person name="Siddiqui K.S."/>
            <person name="De Francisci D."/>
            <person name="Chong K.W."/>
            <person name="Pilak O."/>
            <person name="Chew H.H."/>
            <person name="De Maere M.Z."/>
            <person name="Ting L."/>
            <person name="Katrib M."/>
            <person name="Ng C."/>
            <person name="Sowers K.R."/>
            <person name="Galperin M.Y."/>
            <person name="Anderson I.J."/>
            <person name="Ivanova N."/>
            <person name="Dalin E."/>
            <person name="Martinez M."/>
            <person name="Lapidus A."/>
            <person name="Hauser L."/>
            <person name="Land M."/>
            <person name="Thomas T."/>
            <person name="Cavicchioli R."/>
        </authorList>
    </citation>
    <scope>NUCLEOTIDE SEQUENCE [LARGE SCALE GENOMIC DNA]</scope>
    <source>
        <strain>DSM 6242 / NBRC 107633 / OCM 468 / ACE-M</strain>
    </source>
</reference>
<dbReference type="EC" id="6.3.5.-" evidence="1"/>
<dbReference type="EMBL" id="CP000300">
    <property type="protein sequence ID" value="ABE52556.1"/>
    <property type="molecule type" value="Genomic_DNA"/>
</dbReference>
<dbReference type="RefSeq" id="WP_011499699.1">
    <property type="nucleotide sequence ID" value="NC_007955.1"/>
</dbReference>
<dbReference type="SMR" id="Q12VH0"/>
<dbReference type="STRING" id="259564.Mbur_1656"/>
<dbReference type="GeneID" id="3997289"/>
<dbReference type="KEGG" id="mbu:Mbur_1656"/>
<dbReference type="HOGENOM" id="CLU_105899_1_2_2"/>
<dbReference type="OrthoDB" id="15210at2157"/>
<dbReference type="Proteomes" id="UP000001979">
    <property type="component" value="Chromosome"/>
</dbReference>
<dbReference type="GO" id="GO:0050566">
    <property type="term" value="F:asparaginyl-tRNA synthase (glutamine-hydrolyzing) activity"/>
    <property type="evidence" value="ECO:0007669"/>
    <property type="project" value="RHEA"/>
</dbReference>
<dbReference type="GO" id="GO:0005524">
    <property type="term" value="F:ATP binding"/>
    <property type="evidence" value="ECO:0007669"/>
    <property type="project" value="UniProtKB-KW"/>
</dbReference>
<dbReference type="GO" id="GO:0050567">
    <property type="term" value="F:glutaminyl-tRNA synthase (glutamine-hydrolyzing) activity"/>
    <property type="evidence" value="ECO:0007669"/>
    <property type="project" value="UniProtKB-UniRule"/>
</dbReference>
<dbReference type="GO" id="GO:0070681">
    <property type="term" value="P:glutaminyl-tRNAGln biosynthesis via transamidation"/>
    <property type="evidence" value="ECO:0007669"/>
    <property type="project" value="TreeGrafter"/>
</dbReference>
<dbReference type="GO" id="GO:0006450">
    <property type="term" value="P:regulation of translational fidelity"/>
    <property type="evidence" value="ECO:0007669"/>
    <property type="project" value="InterPro"/>
</dbReference>
<dbReference type="GO" id="GO:0006412">
    <property type="term" value="P:translation"/>
    <property type="evidence" value="ECO:0007669"/>
    <property type="project" value="UniProtKB-UniRule"/>
</dbReference>
<dbReference type="Gene3D" id="1.10.20.60">
    <property type="entry name" value="Glu-tRNAGln amidotransferase C subunit, N-terminal domain"/>
    <property type="match status" value="1"/>
</dbReference>
<dbReference type="HAMAP" id="MF_00122">
    <property type="entry name" value="GatC"/>
    <property type="match status" value="1"/>
</dbReference>
<dbReference type="InterPro" id="IPR036113">
    <property type="entry name" value="Asp/Glu-ADT_sf_sub_c"/>
</dbReference>
<dbReference type="InterPro" id="IPR003837">
    <property type="entry name" value="GatC"/>
</dbReference>
<dbReference type="NCBIfam" id="TIGR00135">
    <property type="entry name" value="gatC"/>
    <property type="match status" value="1"/>
</dbReference>
<dbReference type="PANTHER" id="PTHR15004">
    <property type="entry name" value="GLUTAMYL-TRNA(GLN) AMIDOTRANSFERASE SUBUNIT C, MITOCHONDRIAL"/>
    <property type="match status" value="1"/>
</dbReference>
<dbReference type="PANTHER" id="PTHR15004:SF0">
    <property type="entry name" value="GLUTAMYL-TRNA(GLN) AMIDOTRANSFERASE SUBUNIT C, MITOCHONDRIAL"/>
    <property type="match status" value="1"/>
</dbReference>
<dbReference type="Pfam" id="PF02686">
    <property type="entry name" value="GatC"/>
    <property type="match status" value="1"/>
</dbReference>
<dbReference type="SUPFAM" id="SSF141000">
    <property type="entry name" value="Glu-tRNAGln amidotransferase C subunit"/>
    <property type="match status" value="1"/>
</dbReference>
<proteinExistence type="inferred from homology"/>
<accession>Q12VH0</accession>
<organism>
    <name type="scientific">Methanococcoides burtonii (strain DSM 6242 / NBRC 107633 / OCM 468 / ACE-M)</name>
    <dbReference type="NCBI Taxonomy" id="259564"/>
    <lineage>
        <taxon>Archaea</taxon>
        <taxon>Methanobacteriati</taxon>
        <taxon>Methanobacteriota</taxon>
        <taxon>Stenosarchaea group</taxon>
        <taxon>Methanomicrobia</taxon>
        <taxon>Methanosarcinales</taxon>
        <taxon>Methanosarcinaceae</taxon>
        <taxon>Methanococcoides</taxon>
    </lineage>
</organism>
<sequence length="93" mass="10425">MITKDEVEHVGWLARIEIGAAEAEDYAVKLSSVLDYFGQLDEVDTEGVEPTYHVADIMNVFREDVVKPSLDQKDVLANTAEEKDGYIKAPRII</sequence>
<name>GATC_METBU</name>
<gene>
    <name evidence="1" type="primary">gatC</name>
    <name type="ordered locus">Mbur_1656</name>
</gene>
<feature type="chain" id="PRO_1000076186" description="Aspartyl/glutamyl-tRNA(Asn/Gln) amidotransferase subunit C">
    <location>
        <begin position="1"/>
        <end position="93"/>
    </location>
</feature>